<name>OBG_ECODH</name>
<proteinExistence type="inferred from homology"/>
<gene>
    <name evidence="1" type="primary">obg</name>
    <name type="ordered locus">ECDH10B_3357</name>
</gene>
<accession>B1XHF9</accession>
<protein>
    <recommendedName>
        <fullName evidence="1">GTPase Obg</fullName>
        <ecNumber evidence="1">3.6.5.-</ecNumber>
    </recommendedName>
    <alternativeName>
        <fullName evidence="1">GTP-binding protein Obg</fullName>
    </alternativeName>
</protein>
<sequence length="390" mass="43286">MKFVDEASILVVAGDGGNGCVSFRREKYIPKGGPDGGDGGDGGDVWMEADENLNTLIDYRFEKSFRAERGQNGASRDCTGKRGKDVTIKVPVGTRVIDQGTGETMGDMTKHGQRLLVAKGGWHGLGNTRFKSSVNRTPRQKTNGTPGDKRELLLELMLLADVGMLGMPNAGKSTFIRAVSAAKPKVADYPFTTLVPSLGVVRMDNEKSFVVADIPGLIEGAAEGAGLGIRFLKHLERCRVLLHLIDIDPIDGTDPVENARIIISELEKYSQDLATKPRWLVFNKIDLLDKVEAEEKAKAIAEALGWEDKYYLISAASGLGVKDLCWDVMTFIIENPVVQAEEAKQPEKVEFMWDDYHRQQLEEIAEEDDEDWDDDWDEDDEEGVEFIYKR</sequence>
<reference key="1">
    <citation type="journal article" date="2008" name="J. Bacteriol.">
        <title>The complete genome sequence of Escherichia coli DH10B: insights into the biology of a laboratory workhorse.</title>
        <authorList>
            <person name="Durfee T."/>
            <person name="Nelson R."/>
            <person name="Baldwin S."/>
            <person name="Plunkett G. III"/>
            <person name="Burland V."/>
            <person name="Mau B."/>
            <person name="Petrosino J.F."/>
            <person name="Qin X."/>
            <person name="Muzny D.M."/>
            <person name="Ayele M."/>
            <person name="Gibbs R.A."/>
            <person name="Csorgo B."/>
            <person name="Posfai G."/>
            <person name="Weinstock G.M."/>
            <person name="Blattner F.R."/>
        </authorList>
    </citation>
    <scope>NUCLEOTIDE SEQUENCE [LARGE SCALE GENOMIC DNA]</scope>
    <source>
        <strain>K12 / DH10B</strain>
    </source>
</reference>
<comment type="function">
    <text evidence="1">An essential GTPase which binds GTP, GDP and possibly (p)ppGpp with moderate affinity, with high nucleotide exchange rates and a fairly low GTP hydrolysis rate. Plays a role in control of the cell cycle, stress response, ribosome biogenesis and in those bacteria that undergo differentiation, in morphogenesis control.</text>
</comment>
<comment type="cofactor">
    <cofactor evidence="1">
        <name>Mg(2+)</name>
        <dbReference type="ChEBI" id="CHEBI:18420"/>
    </cofactor>
</comment>
<comment type="subunit">
    <text evidence="1">Monomer.</text>
</comment>
<comment type="subcellular location">
    <subcellularLocation>
        <location evidence="1">Cytoplasm</location>
    </subcellularLocation>
</comment>
<comment type="similarity">
    <text evidence="1">Belongs to the TRAFAC class OBG-HflX-like GTPase superfamily. OBG GTPase family.</text>
</comment>
<feature type="chain" id="PRO_0000385912" description="GTPase Obg">
    <location>
        <begin position="1"/>
        <end position="390"/>
    </location>
</feature>
<feature type="domain" description="Obg" evidence="2">
    <location>
        <begin position="1"/>
        <end position="159"/>
    </location>
</feature>
<feature type="domain" description="OBG-type G" evidence="1">
    <location>
        <begin position="160"/>
        <end position="333"/>
    </location>
</feature>
<feature type="region of interest" description="Disordered" evidence="3">
    <location>
        <begin position="127"/>
        <end position="147"/>
    </location>
</feature>
<feature type="compositionally biased region" description="Polar residues" evidence="3">
    <location>
        <begin position="129"/>
        <end position="145"/>
    </location>
</feature>
<feature type="binding site" evidence="1">
    <location>
        <begin position="166"/>
        <end position="173"/>
    </location>
    <ligand>
        <name>GTP</name>
        <dbReference type="ChEBI" id="CHEBI:37565"/>
    </ligand>
</feature>
<feature type="binding site" evidence="1">
    <location>
        <position position="173"/>
    </location>
    <ligand>
        <name>Mg(2+)</name>
        <dbReference type="ChEBI" id="CHEBI:18420"/>
    </ligand>
</feature>
<feature type="binding site" evidence="1">
    <location>
        <begin position="191"/>
        <end position="195"/>
    </location>
    <ligand>
        <name>GTP</name>
        <dbReference type="ChEBI" id="CHEBI:37565"/>
    </ligand>
</feature>
<feature type="binding site" evidence="1">
    <location>
        <position position="193"/>
    </location>
    <ligand>
        <name>Mg(2+)</name>
        <dbReference type="ChEBI" id="CHEBI:18420"/>
    </ligand>
</feature>
<feature type="binding site" evidence="1">
    <location>
        <begin position="213"/>
        <end position="216"/>
    </location>
    <ligand>
        <name>GTP</name>
        <dbReference type="ChEBI" id="CHEBI:37565"/>
    </ligand>
</feature>
<feature type="binding site" evidence="1">
    <location>
        <begin position="283"/>
        <end position="286"/>
    </location>
    <ligand>
        <name>GTP</name>
        <dbReference type="ChEBI" id="CHEBI:37565"/>
    </ligand>
</feature>
<feature type="binding site" evidence="1">
    <location>
        <begin position="314"/>
        <end position="316"/>
    </location>
    <ligand>
        <name>GTP</name>
        <dbReference type="ChEBI" id="CHEBI:37565"/>
    </ligand>
</feature>
<keyword id="KW-0963">Cytoplasm</keyword>
<keyword id="KW-0342">GTP-binding</keyword>
<keyword id="KW-0378">Hydrolase</keyword>
<keyword id="KW-0460">Magnesium</keyword>
<keyword id="KW-0479">Metal-binding</keyword>
<keyword id="KW-0547">Nucleotide-binding</keyword>
<evidence type="ECO:0000255" key="1">
    <source>
        <dbReference type="HAMAP-Rule" id="MF_01454"/>
    </source>
</evidence>
<evidence type="ECO:0000255" key="2">
    <source>
        <dbReference type="PROSITE-ProRule" id="PRU01231"/>
    </source>
</evidence>
<evidence type="ECO:0000256" key="3">
    <source>
        <dbReference type="SAM" id="MobiDB-lite"/>
    </source>
</evidence>
<dbReference type="EC" id="3.6.5.-" evidence="1"/>
<dbReference type="EMBL" id="CP000948">
    <property type="protein sequence ID" value="ACB04260.1"/>
    <property type="molecule type" value="Genomic_DNA"/>
</dbReference>
<dbReference type="SASBDB" id="B1XHF9"/>
<dbReference type="SMR" id="B1XHF9"/>
<dbReference type="KEGG" id="ecd:ECDH10B_3357"/>
<dbReference type="HOGENOM" id="CLU_011747_2_0_6"/>
<dbReference type="GO" id="GO:0005737">
    <property type="term" value="C:cytoplasm"/>
    <property type="evidence" value="ECO:0007669"/>
    <property type="project" value="UniProtKB-SubCell"/>
</dbReference>
<dbReference type="GO" id="GO:0005525">
    <property type="term" value="F:GTP binding"/>
    <property type="evidence" value="ECO:0007669"/>
    <property type="project" value="UniProtKB-UniRule"/>
</dbReference>
<dbReference type="GO" id="GO:0003924">
    <property type="term" value="F:GTPase activity"/>
    <property type="evidence" value="ECO:0007669"/>
    <property type="project" value="UniProtKB-UniRule"/>
</dbReference>
<dbReference type="GO" id="GO:0000287">
    <property type="term" value="F:magnesium ion binding"/>
    <property type="evidence" value="ECO:0007669"/>
    <property type="project" value="InterPro"/>
</dbReference>
<dbReference type="GO" id="GO:0042254">
    <property type="term" value="P:ribosome biogenesis"/>
    <property type="evidence" value="ECO:0007669"/>
    <property type="project" value="UniProtKB-UniRule"/>
</dbReference>
<dbReference type="CDD" id="cd01898">
    <property type="entry name" value="Obg"/>
    <property type="match status" value="1"/>
</dbReference>
<dbReference type="FunFam" id="2.70.210.12:FF:000001">
    <property type="entry name" value="GTPase Obg"/>
    <property type="match status" value="1"/>
</dbReference>
<dbReference type="FunFam" id="3.40.50.300:FF:000185">
    <property type="entry name" value="GTPase Obg"/>
    <property type="match status" value="1"/>
</dbReference>
<dbReference type="Gene3D" id="2.70.210.12">
    <property type="entry name" value="GTP1/OBG domain"/>
    <property type="match status" value="1"/>
</dbReference>
<dbReference type="Gene3D" id="3.40.50.300">
    <property type="entry name" value="P-loop containing nucleotide triphosphate hydrolases"/>
    <property type="match status" value="1"/>
</dbReference>
<dbReference type="HAMAP" id="MF_01454">
    <property type="entry name" value="GTPase_Obg"/>
    <property type="match status" value="1"/>
</dbReference>
<dbReference type="InterPro" id="IPR031167">
    <property type="entry name" value="G_OBG"/>
</dbReference>
<dbReference type="InterPro" id="IPR006073">
    <property type="entry name" value="GTP-bd"/>
</dbReference>
<dbReference type="InterPro" id="IPR014100">
    <property type="entry name" value="GTP-bd_Obg/CgtA"/>
</dbReference>
<dbReference type="InterPro" id="IPR006074">
    <property type="entry name" value="GTP1-OBG_CS"/>
</dbReference>
<dbReference type="InterPro" id="IPR006169">
    <property type="entry name" value="GTP1_OBG_dom"/>
</dbReference>
<dbReference type="InterPro" id="IPR036726">
    <property type="entry name" value="GTP1_OBG_dom_sf"/>
</dbReference>
<dbReference type="InterPro" id="IPR045086">
    <property type="entry name" value="OBG_GTPase"/>
</dbReference>
<dbReference type="InterPro" id="IPR027417">
    <property type="entry name" value="P-loop_NTPase"/>
</dbReference>
<dbReference type="NCBIfam" id="TIGR02729">
    <property type="entry name" value="Obg_CgtA"/>
    <property type="match status" value="1"/>
</dbReference>
<dbReference type="NCBIfam" id="NF008955">
    <property type="entry name" value="PRK12297.1"/>
    <property type="match status" value="1"/>
</dbReference>
<dbReference type="NCBIfam" id="NF008956">
    <property type="entry name" value="PRK12299.1"/>
    <property type="match status" value="1"/>
</dbReference>
<dbReference type="PANTHER" id="PTHR11702">
    <property type="entry name" value="DEVELOPMENTALLY REGULATED GTP-BINDING PROTEIN-RELATED"/>
    <property type="match status" value="1"/>
</dbReference>
<dbReference type="PANTHER" id="PTHR11702:SF31">
    <property type="entry name" value="MITOCHONDRIAL RIBOSOME-ASSOCIATED GTPASE 2"/>
    <property type="match status" value="1"/>
</dbReference>
<dbReference type="Pfam" id="PF01018">
    <property type="entry name" value="GTP1_OBG"/>
    <property type="match status" value="1"/>
</dbReference>
<dbReference type="Pfam" id="PF01926">
    <property type="entry name" value="MMR_HSR1"/>
    <property type="match status" value="1"/>
</dbReference>
<dbReference type="PIRSF" id="PIRSF002401">
    <property type="entry name" value="GTP_bd_Obg/CgtA"/>
    <property type="match status" value="1"/>
</dbReference>
<dbReference type="PRINTS" id="PR00326">
    <property type="entry name" value="GTP1OBG"/>
</dbReference>
<dbReference type="SUPFAM" id="SSF82051">
    <property type="entry name" value="Obg GTP-binding protein N-terminal domain"/>
    <property type="match status" value="1"/>
</dbReference>
<dbReference type="SUPFAM" id="SSF52540">
    <property type="entry name" value="P-loop containing nucleoside triphosphate hydrolases"/>
    <property type="match status" value="1"/>
</dbReference>
<dbReference type="PROSITE" id="PS51710">
    <property type="entry name" value="G_OBG"/>
    <property type="match status" value="1"/>
</dbReference>
<dbReference type="PROSITE" id="PS00905">
    <property type="entry name" value="GTP1_OBG"/>
    <property type="match status" value="1"/>
</dbReference>
<dbReference type="PROSITE" id="PS51883">
    <property type="entry name" value="OBG"/>
    <property type="match status" value="1"/>
</dbReference>
<organism>
    <name type="scientific">Escherichia coli (strain K12 / DH10B)</name>
    <dbReference type="NCBI Taxonomy" id="316385"/>
    <lineage>
        <taxon>Bacteria</taxon>
        <taxon>Pseudomonadati</taxon>
        <taxon>Pseudomonadota</taxon>
        <taxon>Gammaproteobacteria</taxon>
        <taxon>Enterobacterales</taxon>
        <taxon>Enterobacteriaceae</taxon>
        <taxon>Escherichia</taxon>
    </lineage>
</organism>